<comment type="function">
    <text evidence="2 8 9">Non-reducing polyketide synthase (NRPKS); part of the gene cluster 27 that mediates the biosynthesis of asparasone A, a sclerotium-specific anthraquinone pigment important for sclerotial survival (PubMed:24405210, PubMed:24412484). Catalyzes the formation of the aromatic polyketide from acetyl coenzyme A and seven malonyl coenzyme A molecules (PubMed:24405210). Through its product template (PT) domain, catalyzes the cyclization of polyketide backbone via C6-C11 aldolcondensation (By similarity).</text>
</comment>
<comment type="cofactor">
    <cofactor evidence="1">
        <name>pantetheine 4'-phosphate</name>
        <dbReference type="ChEBI" id="CHEBI:47942"/>
    </cofactor>
    <text evidence="3">Binds 1 phosphopantetheine covalently.</text>
</comment>
<comment type="pathway">
    <text evidence="12">Secondary metabolite biosynthesis.</text>
</comment>
<comment type="induction">
    <text evidence="9">Expression is induced by the developmental and secondary metabolism regulator veA, as well as by the cluster 27 transcription factor znf27 (PubMed:24412484).</text>
</comment>
<comment type="domain">
    <text evidence="2">Multidomain protein; including a starter unit:ACP transacylase (SAT) that selects the starter unit; a ketosynthase (KS) that catalyzes repeated decarboxylative condensation to elongate the polyketide backbone; a malonyl-CoA:ACP transacylase (MAT) that selects and transfers the extender unit malonyl-CoA; a product template (PT) domain that controls the immediate cyclization regioselectivity of the reactive polyketide backbone; and an acyl-carrier protein (ACP) that serves as the tether of the growing and completed polyketide via its phosphopantetheinyl arm.</text>
</comment>
<comment type="disruption phenotype">
    <text evidence="8 9">Impairs the production of asparasone A and causess the formation of greyish-yellow sclerotia rather than the dark brown sclerotia normally produced (PubMed:24405210, PubMed:24412484). Leads to a significant decrease of resistance to insect predation and increased susceptibility to the deleterious effects of ultraviolet light and heat (PubMed:24412484).</text>
</comment>
<accession>B8MYS6</accession>
<gene>
    <name evidence="10" type="primary">pks27</name>
    <name type="ORF">AFLA_082150</name>
</gene>
<feature type="chain" id="PRO_0000436110" description="Non-reducing polyketide synthase pks27">
    <location>
        <begin position="1"/>
        <end position="2045"/>
    </location>
</feature>
<feature type="domain" description="Ketosynthase family 3 (KS3)" evidence="5">
    <location>
        <begin position="380"/>
        <end position="813"/>
    </location>
</feature>
<feature type="domain" description="PKS/mFAS DH" evidence="6">
    <location>
        <begin position="1289"/>
        <end position="1599"/>
    </location>
</feature>
<feature type="domain" description="Carrier" evidence="4">
    <location>
        <begin position="1635"/>
        <end position="1712"/>
    </location>
</feature>
<feature type="region of interest" description="N-terminal acylcarrier protein transacylase domain (SAT)" evidence="3">
    <location>
        <begin position="10"/>
        <end position="247"/>
    </location>
</feature>
<feature type="region of interest" description="Malonyl-CoA:ACP transacylase (MAT) domain" evidence="3">
    <location>
        <begin position="913"/>
        <end position="1213"/>
    </location>
</feature>
<feature type="region of interest" description="N-terminal hotdog fold" evidence="6">
    <location>
        <begin position="1289"/>
        <end position="1422"/>
    </location>
</feature>
<feature type="region of interest" description="C-terminal hotdog fold" evidence="6">
    <location>
        <begin position="1442"/>
        <end position="1599"/>
    </location>
</feature>
<feature type="region of interest" description="Disordered" evidence="7">
    <location>
        <begin position="1612"/>
        <end position="1636"/>
    </location>
</feature>
<feature type="region of interest" description="Product template (PT) domain" evidence="3">
    <location>
        <begin position="1640"/>
        <end position="1709"/>
    </location>
</feature>
<feature type="region of interest" description="Disordered" evidence="7">
    <location>
        <begin position="1735"/>
        <end position="1776"/>
    </location>
</feature>
<feature type="region of interest" description="Thioesterase" evidence="3">
    <location>
        <begin position="1798"/>
        <end position="2039"/>
    </location>
</feature>
<feature type="compositionally biased region" description="Low complexity" evidence="7">
    <location>
        <begin position="1619"/>
        <end position="1636"/>
    </location>
</feature>
<feature type="compositionally biased region" description="Basic and acidic residues" evidence="7">
    <location>
        <begin position="1739"/>
        <end position="1750"/>
    </location>
</feature>
<feature type="compositionally biased region" description="Low complexity" evidence="7">
    <location>
        <begin position="1760"/>
        <end position="1776"/>
    </location>
</feature>
<feature type="active site" description="For beta-ketoacyl synthase activity" evidence="5">
    <location>
        <position position="552"/>
    </location>
</feature>
<feature type="active site" description="For beta-ketoacyl synthase activity" evidence="5">
    <location>
        <position position="687"/>
    </location>
</feature>
<feature type="active site" description="For beta-ketoacyl synthase activity" evidence="5">
    <location>
        <position position="731"/>
    </location>
</feature>
<feature type="active site" description="Proton acceptor; for dehydratase activity" evidence="6">
    <location>
        <position position="1321"/>
    </location>
</feature>
<feature type="active site" description="Proton donor; for dehydratase activity" evidence="6">
    <location>
        <position position="1511"/>
    </location>
</feature>
<feature type="modified residue" description="O-(pantetheine 4'-phosphoryl)serine" evidence="4">
    <location>
        <position position="1672"/>
    </location>
</feature>
<reference key="1">
    <citation type="journal article" date="2015" name="Genome Announc.">
        <title>Genome sequence of Aspergillus flavus NRRL 3357, a strain that causes aflatoxin contamination of food and feed.</title>
        <authorList>
            <person name="Nierman W.C."/>
            <person name="Yu J."/>
            <person name="Fedorova-Abrams N.D."/>
            <person name="Losada L."/>
            <person name="Cleveland T.E."/>
            <person name="Bhatnagar D."/>
            <person name="Bennett J.W."/>
            <person name="Dean R."/>
            <person name="Payne G.A."/>
        </authorList>
    </citation>
    <scope>NUCLEOTIDE SEQUENCE [LARGE SCALE GENOMIC DNA]</scope>
    <source>
        <strain>ATCC 200026 / FGSC A1120 / IAM 13836 / NRRL 3357 / JCM 12722 / SRRC 167</strain>
    </source>
</reference>
<reference key="2">
    <citation type="journal article" date="2014" name="Food Addit. Contam. Part A Chem. Anal. Control Expo. Risk Assess.">
        <title>Identification of novel metabolites from Aspergillus flavus by high resolution and multiple stage mass spectrometry.</title>
        <authorList>
            <person name="Malysheva S.V."/>
            <person name="Arroyo-Manzanares N."/>
            <person name="Cary J.W."/>
            <person name="Ehrlich K.C."/>
            <person name="Vanden Bussche J."/>
            <person name="Vanhaecke L."/>
            <person name="Bhatnagar D."/>
            <person name="Di Mavungu J.D."/>
            <person name="De Saeger S."/>
        </authorList>
    </citation>
    <scope>FUNCTION</scope>
    <scope>DISRUPTION PHENOTYPE</scope>
    <scope>CATALYTIC ACTIVITY</scope>
</reference>
<reference key="3">
    <citation type="journal article" date="2014" name="Fungal Genet. Biol.">
        <title>Functional characterization of a veA-dependent polyketide synthase gene in Aspergillus flavus necessary for the synthesis of asparasone, a sclerotium-specific pigment.</title>
        <authorList>
            <person name="Cary J.W."/>
            <person name="Harris-Coward P.Y."/>
            <person name="Ehrlich K.C."/>
            <person name="Di Mavungu J.D."/>
            <person name="Malysheva S.V."/>
            <person name="De Saeger S."/>
            <person name="Dowd P.F."/>
            <person name="Shantappa S."/>
            <person name="Martens S.L."/>
            <person name="Calvo A.M."/>
        </authorList>
    </citation>
    <scope>INDUCTION</scope>
    <scope>FUNCTION</scope>
    <scope>DISRUPTION PHENOTYPE</scope>
</reference>
<sequence>MVVEERKQTIVFGDLTCDSVAGLRTLVTVKDNPLLISFFERVTTGLREEIGLLPFSQRQRFIRFTTFEELLARVQRSTCPHPALEKALACTYQLACFIRQYTSPGHKYPSTQQTCLVGLCTGLLSAAAVGCCQSITDLLPLATHTVLIAFRAGLFVADVRDRLEPQTGAPLAWSVLIPGLDGDTASLTLQKYNEEKGLPATSAPYISTYANTGVTLSGLPSALNDLLDSSCLPKNRALTIPIYAPYHASHLYGQKDIESILRKASATEFASYQCQFSILSSITGQSIQVDTFGALIDYALNAILREPLRLDRIVSSLGEALLSDSPIRGCTIFPIATVIGQSLAAALRKHGAPDITVDPCMNSSIAVRDDRTSTTGHLGHSKLAIIGYSGRFPDANNNEELWQLLHEGRDVASITPSNRWDVKTHVDPTLKKKNTMGTPYGCWLKEPGLFDAKFFALSPREAPQVDPAQRLALMTAYEAMEFAGLVPDSTPSSQSDRIGVFYGTTSNDWGETNSSQNVDTYYIPGSCRAFIPGRQNFFYKFSGPSYSVDTACSSGLAALHLACNSLLKGDIDTAICGGTNVLTNPDITAGLDRGHFLSRTGNCKTFDDDADGYCRGEGVCTMVIKRLEDAKADNDPIIAVILGAYTNHSAEAESITRPHIGAQKAIFEKVLTSAGVDPYSVGYVEMHGTGTQAGDAREMKSVLSVFAPETERPRTDAERLFLGSAKANVGHGESVSGPIALIKSLMMLERNEIPPHCGIKTKINSGFPTDLMDRNVHIAKQPIPWERPEGGVRRIMINNFSAAGGNSSVLIEDAPVFEPKSKEAEPRSTHVVAVSAKSSTALIANIKSLLSYMNATKPELPSLSYTTTARRTHHPFRVMVSGPDLPEIHALLENKLASPTVQNRARAAQRAAFAFTGQGSQYIGMGESLLNFSTFRSDIERFNGIAETLGFPSFLPLLESGNGDISELPPLVVQVGTVCTQIAMARLWRSWGIEPCAVVGHSLGEYAALNIAGVLSEADTIFLAGKRAQLLQEDISANTHAMLAIGTSVEETRSLCDGLEYDIACINTPKETVLSGTNKQIDRILDILSSTSLKKTRLRVPFAFHSSQMEPVLEKFKAAARGVKFYEPKVPVISPLFGEVLTSKEPFGPEYLARHCRETVNFATALESAKADGVISSALWVEIGAHPIVSGLLRNNLDSTLKTVPTLQRNKDTWKVLTSSLSTLYESGVDIRWSEYHRDFIPGLSVLRLPSYNWDLKEYWMQYVNDWSLYKGDAQFLKGTPGLSTTCVHKLVEEKKDGNKITVVGEVDVLRDDVDPFVRGHRVNNLPLVTPSVYAEMALVIGEYLRKQQTKLSGTLVDLQHMDVQRPFATKSKGKGPQLLQCHVVLDCETFQGSVEFWSVTPEGKKLVRHALASITFPDAKAAQEEVQQRAQGIMKEMDDMAARLNTDDRVQKFTGKTGYNLVSSLASYDPEYMGVSSVLLDSGRLEAVATVKFNNPRTDGVYHVNPYLIDNLGQPALFVMNANDQADLSKEVFVNHGWKSLHFYKPLSIQKTYRSHVRMSGPDADGLYGGDMVVFEDKEVVAVYKGIKAQGVPRRLMDYIVHMRDDTKAGAPAGGTLNASQSAAANPAADPSAQADSDNWQAALKIISEESGVPIAELSPEAAFDDLGVDSLLALLCASRFREELGLHYESSIFLDHPTIKELEAFWKQGAPETGAVTVSGRDAVLNSMFTEAEAEVDQDKNSSDEDRSSLGTSSYEVISPNTTETTPEITKTSSPKISATSLLLQGNPALPSTVKTLFLLPDGSGSCSSYAGLPRIHPSIAVVGVNCPFMKTPESYTCGIDEVTQMYITEIRRRQPHGPYALGGWSVGGIFSYHIAQQLAAQGEQVSELILIDCPVPKGLDHLPRRYYEYCDTIGLLGDVNGVKRDPPPWLISHFEACVNSLHTYHATPFRPNNAPRTQIIWACDAIDKHCEPKFDRRPDDPEGLKFLTSTRTDFGPCGWETLLPEEDMTLDRMTGANHFSMMKGEFAKRLSEMIEGFLMIGN</sequence>
<organism>
    <name type="scientific">Aspergillus flavus (strain ATCC 200026 / FGSC A1120 / IAM 13836 / NRRL 3357 / JCM 12722 / SRRC 167)</name>
    <dbReference type="NCBI Taxonomy" id="332952"/>
    <lineage>
        <taxon>Eukaryota</taxon>
        <taxon>Fungi</taxon>
        <taxon>Dikarya</taxon>
        <taxon>Ascomycota</taxon>
        <taxon>Pezizomycotina</taxon>
        <taxon>Eurotiomycetes</taxon>
        <taxon>Eurotiomycetidae</taxon>
        <taxon>Eurotiales</taxon>
        <taxon>Aspergillaceae</taxon>
        <taxon>Aspergillus</taxon>
        <taxon>Aspergillus subgen. Circumdati</taxon>
    </lineage>
</organism>
<keyword id="KW-0012">Acyltransferase</keyword>
<keyword id="KW-0596">Phosphopantetheine</keyword>
<keyword id="KW-0597">Phosphoprotein</keyword>
<keyword id="KW-0808">Transferase</keyword>
<dbReference type="EC" id="2.3.1.-" evidence="9"/>
<dbReference type="EMBL" id="EQ963472">
    <property type="protein sequence ID" value="EED57518.1"/>
    <property type="molecule type" value="Genomic_DNA"/>
</dbReference>
<dbReference type="RefSeq" id="XP_002373130.1">
    <property type="nucleotide sequence ID" value="XM_002373089.1"/>
</dbReference>
<dbReference type="SMR" id="B8MYS6"/>
<dbReference type="STRING" id="332952.B8MYS6"/>
<dbReference type="ESTHER" id="aspor-q2ur58">
    <property type="family name" value="Thioesterase"/>
</dbReference>
<dbReference type="EnsemblFungi" id="EED57518">
    <property type="protein sequence ID" value="EED57518"/>
    <property type="gene ID" value="AFLA_082150"/>
</dbReference>
<dbReference type="VEuPathDB" id="FungiDB:AFLA_003781"/>
<dbReference type="eggNOG" id="KOG1202">
    <property type="taxonomic scope" value="Eukaryota"/>
</dbReference>
<dbReference type="HOGENOM" id="CLU_000022_6_0_1"/>
<dbReference type="OMA" id="NDWGETN"/>
<dbReference type="GO" id="GO:0004315">
    <property type="term" value="F:3-oxoacyl-[acyl-carrier-protein] synthase activity"/>
    <property type="evidence" value="ECO:0007669"/>
    <property type="project" value="InterPro"/>
</dbReference>
<dbReference type="GO" id="GO:0004312">
    <property type="term" value="F:fatty acid synthase activity"/>
    <property type="evidence" value="ECO:0007669"/>
    <property type="project" value="TreeGrafter"/>
</dbReference>
<dbReference type="GO" id="GO:0031177">
    <property type="term" value="F:phosphopantetheine binding"/>
    <property type="evidence" value="ECO:0007669"/>
    <property type="project" value="InterPro"/>
</dbReference>
<dbReference type="GO" id="GO:0006633">
    <property type="term" value="P:fatty acid biosynthetic process"/>
    <property type="evidence" value="ECO:0007669"/>
    <property type="project" value="InterPro"/>
</dbReference>
<dbReference type="GO" id="GO:0030639">
    <property type="term" value="P:polyketide biosynthetic process"/>
    <property type="evidence" value="ECO:0007669"/>
    <property type="project" value="UniProtKB-ARBA"/>
</dbReference>
<dbReference type="GO" id="GO:0009403">
    <property type="term" value="P:toxin biosynthetic process"/>
    <property type="evidence" value="ECO:0007669"/>
    <property type="project" value="UniProtKB-ARBA"/>
</dbReference>
<dbReference type="CDD" id="cd00833">
    <property type="entry name" value="PKS"/>
    <property type="match status" value="1"/>
</dbReference>
<dbReference type="FunFam" id="3.40.366.10:FF:000002">
    <property type="entry name" value="Probable polyketide synthase 2"/>
    <property type="match status" value="1"/>
</dbReference>
<dbReference type="FunFam" id="1.10.1200.10:FF:000011">
    <property type="entry name" value="Sterigmatocystin biosynthesis polyketide synthase"/>
    <property type="match status" value="1"/>
</dbReference>
<dbReference type="Gene3D" id="3.30.70.3290">
    <property type="match status" value="1"/>
</dbReference>
<dbReference type="Gene3D" id="3.40.47.10">
    <property type="match status" value="1"/>
</dbReference>
<dbReference type="Gene3D" id="1.10.1200.10">
    <property type="entry name" value="ACP-like"/>
    <property type="match status" value="1"/>
</dbReference>
<dbReference type="Gene3D" id="3.40.50.1820">
    <property type="entry name" value="alpha/beta hydrolase"/>
    <property type="match status" value="1"/>
</dbReference>
<dbReference type="Gene3D" id="3.40.366.10">
    <property type="entry name" value="Malonyl-Coenzyme A Acyl Carrier Protein, domain 2"/>
    <property type="match status" value="2"/>
</dbReference>
<dbReference type="Gene3D" id="3.10.129.110">
    <property type="entry name" value="Polyketide synthase dehydratase"/>
    <property type="match status" value="1"/>
</dbReference>
<dbReference type="InterPro" id="IPR029058">
    <property type="entry name" value="AB_hydrolase_fold"/>
</dbReference>
<dbReference type="InterPro" id="IPR001227">
    <property type="entry name" value="Ac_transferase_dom_sf"/>
</dbReference>
<dbReference type="InterPro" id="IPR036736">
    <property type="entry name" value="ACP-like_sf"/>
</dbReference>
<dbReference type="InterPro" id="IPR014043">
    <property type="entry name" value="Acyl_transferase_dom"/>
</dbReference>
<dbReference type="InterPro" id="IPR016035">
    <property type="entry name" value="Acyl_Trfase/lysoPLipase"/>
</dbReference>
<dbReference type="InterPro" id="IPR018201">
    <property type="entry name" value="Ketoacyl_synth_AS"/>
</dbReference>
<dbReference type="InterPro" id="IPR014031">
    <property type="entry name" value="Ketoacyl_synth_C"/>
</dbReference>
<dbReference type="InterPro" id="IPR014030">
    <property type="entry name" value="Ketoacyl_synth_N"/>
</dbReference>
<dbReference type="InterPro" id="IPR016036">
    <property type="entry name" value="Malonyl_transacylase_ACP-bd"/>
</dbReference>
<dbReference type="InterPro" id="IPR020841">
    <property type="entry name" value="PKS_Beta-ketoAc_synthase_dom"/>
</dbReference>
<dbReference type="InterPro" id="IPR042104">
    <property type="entry name" value="PKS_dehydratase_sf"/>
</dbReference>
<dbReference type="InterPro" id="IPR049551">
    <property type="entry name" value="PKS_DH_C"/>
</dbReference>
<dbReference type="InterPro" id="IPR049900">
    <property type="entry name" value="PKS_mFAS_DH"/>
</dbReference>
<dbReference type="InterPro" id="IPR050091">
    <property type="entry name" value="PKS_NRPS_Biosynth_Enz"/>
</dbReference>
<dbReference type="InterPro" id="IPR020806">
    <property type="entry name" value="PKS_PP-bd"/>
</dbReference>
<dbReference type="InterPro" id="IPR009081">
    <property type="entry name" value="PP-bd_ACP"/>
</dbReference>
<dbReference type="InterPro" id="IPR030918">
    <property type="entry name" value="PT_fungal_PKS"/>
</dbReference>
<dbReference type="InterPro" id="IPR032088">
    <property type="entry name" value="SAT"/>
</dbReference>
<dbReference type="InterPro" id="IPR001031">
    <property type="entry name" value="Thioesterase"/>
</dbReference>
<dbReference type="InterPro" id="IPR016039">
    <property type="entry name" value="Thiolase-like"/>
</dbReference>
<dbReference type="NCBIfam" id="TIGR04532">
    <property type="entry name" value="PT_fungal_PKS"/>
    <property type="match status" value="1"/>
</dbReference>
<dbReference type="PANTHER" id="PTHR43775">
    <property type="entry name" value="FATTY ACID SYNTHASE"/>
    <property type="match status" value="1"/>
</dbReference>
<dbReference type="PANTHER" id="PTHR43775:SF40">
    <property type="entry name" value="NORSOLORINIC ACID SYNTHASE STCA"/>
    <property type="match status" value="1"/>
</dbReference>
<dbReference type="Pfam" id="PF00698">
    <property type="entry name" value="Acyl_transf_1"/>
    <property type="match status" value="1"/>
</dbReference>
<dbReference type="Pfam" id="PF00109">
    <property type="entry name" value="ketoacyl-synt"/>
    <property type="match status" value="1"/>
</dbReference>
<dbReference type="Pfam" id="PF02801">
    <property type="entry name" value="Ketoacyl-synt_C"/>
    <property type="match status" value="1"/>
</dbReference>
<dbReference type="Pfam" id="PF00550">
    <property type="entry name" value="PP-binding"/>
    <property type="match status" value="1"/>
</dbReference>
<dbReference type="Pfam" id="PF14765">
    <property type="entry name" value="PS-DH"/>
    <property type="match status" value="1"/>
</dbReference>
<dbReference type="Pfam" id="PF16073">
    <property type="entry name" value="SAT"/>
    <property type="match status" value="1"/>
</dbReference>
<dbReference type="Pfam" id="PF00975">
    <property type="entry name" value="Thioesterase"/>
    <property type="match status" value="1"/>
</dbReference>
<dbReference type="SMART" id="SM00827">
    <property type="entry name" value="PKS_AT"/>
    <property type="match status" value="1"/>
</dbReference>
<dbReference type="SMART" id="SM00825">
    <property type="entry name" value="PKS_KS"/>
    <property type="match status" value="1"/>
</dbReference>
<dbReference type="SMART" id="SM00823">
    <property type="entry name" value="PKS_PP"/>
    <property type="match status" value="1"/>
</dbReference>
<dbReference type="SUPFAM" id="SSF47336">
    <property type="entry name" value="ACP-like"/>
    <property type="match status" value="1"/>
</dbReference>
<dbReference type="SUPFAM" id="SSF53474">
    <property type="entry name" value="alpha/beta-Hydrolases"/>
    <property type="match status" value="1"/>
</dbReference>
<dbReference type="SUPFAM" id="SSF52151">
    <property type="entry name" value="FabD/lysophospholipase-like"/>
    <property type="match status" value="1"/>
</dbReference>
<dbReference type="SUPFAM" id="SSF55048">
    <property type="entry name" value="Probable ACP-binding domain of malonyl-CoA ACP transacylase"/>
    <property type="match status" value="1"/>
</dbReference>
<dbReference type="SUPFAM" id="SSF53901">
    <property type="entry name" value="Thiolase-like"/>
    <property type="match status" value="1"/>
</dbReference>
<dbReference type="PROSITE" id="PS50075">
    <property type="entry name" value="CARRIER"/>
    <property type="match status" value="1"/>
</dbReference>
<dbReference type="PROSITE" id="PS00606">
    <property type="entry name" value="KS3_1"/>
    <property type="match status" value="1"/>
</dbReference>
<dbReference type="PROSITE" id="PS52004">
    <property type="entry name" value="KS3_2"/>
    <property type="match status" value="1"/>
</dbReference>
<dbReference type="PROSITE" id="PS52019">
    <property type="entry name" value="PKS_MFAS_DH"/>
    <property type="match status" value="1"/>
</dbReference>
<evidence type="ECO:0000250" key="1">
    <source>
        <dbReference type="UniProtKB" id="A0A0K0MCJ4"/>
    </source>
</evidence>
<evidence type="ECO:0000250" key="2">
    <source>
        <dbReference type="UniProtKB" id="Q5B0D0"/>
    </source>
</evidence>
<evidence type="ECO:0000255" key="3"/>
<evidence type="ECO:0000255" key="4">
    <source>
        <dbReference type="PROSITE-ProRule" id="PRU00258"/>
    </source>
</evidence>
<evidence type="ECO:0000255" key="5">
    <source>
        <dbReference type="PROSITE-ProRule" id="PRU01348"/>
    </source>
</evidence>
<evidence type="ECO:0000255" key="6">
    <source>
        <dbReference type="PROSITE-ProRule" id="PRU01363"/>
    </source>
</evidence>
<evidence type="ECO:0000256" key="7">
    <source>
        <dbReference type="SAM" id="MobiDB-lite"/>
    </source>
</evidence>
<evidence type="ECO:0000269" key="8">
    <source>
    </source>
</evidence>
<evidence type="ECO:0000269" key="9">
    <source>
    </source>
</evidence>
<evidence type="ECO:0000303" key="10">
    <source>
    </source>
</evidence>
<evidence type="ECO:0000305" key="11"/>
<evidence type="ECO:0000305" key="12">
    <source>
    </source>
</evidence>
<protein>
    <recommendedName>
        <fullName evidence="11">Non-reducing polyketide synthase pks27</fullName>
        <shortName evidence="11">NRPKS</shortName>
        <ecNumber evidence="9">2.3.1.-</ecNumber>
    </recommendedName>
    <alternativeName>
        <fullName evidence="11">Asparasone A synthesis protein pks27</fullName>
    </alternativeName>
    <alternativeName>
        <fullName evidence="10">Cluster 27 polyketide synthase</fullName>
    </alternativeName>
</protein>
<proteinExistence type="evidence at protein level"/>
<name>PKS27_ASPFN</name>